<proteinExistence type="evidence at transcript level"/>
<keyword id="KW-0325">Glycoprotein</keyword>
<keyword id="KW-0349">Heme</keyword>
<keyword id="KW-0408">Iron</keyword>
<keyword id="KW-0472">Membrane</keyword>
<keyword id="KW-0479">Metal-binding</keyword>
<keyword id="KW-0503">Monooxygenase</keyword>
<keyword id="KW-0560">Oxidoreductase</keyword>
<keyword id="KW-1185">Reference proteome</keyword>
<keyword id="KW-0812">Transmembrane</keyword>
<keyword id="KW-1133">Transmembrane helix</keyword>
<name>LCSI_PURLI</name>
<reference key="1">
    <citation type="journal article" date="2016" name="PLoS Pathog.">
        <title>Biosynthesis of antibiotic leucinostatins in bio-control fungus Purpureocillium lilacinum and their inhibition on phytophthora revealed by genome mining.</title>
        <authorList>
            <person name="Wang G."/>
            <person name="Liu Z."/>
            <person name="Lin R."/>
            <person name="Li E."/>
            <person name="Mao Z."/>
            <person name="Ling J."/>
            <person name="Yang Y."/>
            <person name="Yin W.B."/>
            <person name="Xie B."/>
        </authorList>
    </citation>
    <scope>NUCLEOTIDE SEQUENCE [LARGE SCALE GENOMIC DNA]</scope>
    <scope>IDENTIFICATION</scope>
    <scope>FUNCTION</scope>
    <scope>INDUCTION</scope>
    <scope>PATHWAY</scope>
    <source>
        <strain>PLBJ-1</strain>
    </source>
</reference>
<organism>
    <name type="scientific">Purpureocillium lilacinum</name>
    <name type="common">Paecilomyces lilacinus</name>
    <dbReference type="NCBI Taxonomy" id="33203"/>
    <lineage>
        <taxon>Eukaryota</taxon>
        <taxon>Fungi</taxon>
        <taxon>Dikarya</taxon>
        <taxon>Ascomycota</taxon>
        <taxon>Pezizomycotina</taxon>
        <taxon>Sordariomycetes</taxon>
        <taxon>Hypocreomycetidae</taxon>
        <taxon>Hypocreales</taxon>
        <taxon>Ophiocordycipitaceae</taxon>
        <taxon>Purpureocillium</taxon>
    </lineage>
</organism>
<dbReference type="EC" id="1.-.-.-" evidence="7"/>
<dbReference type="EMBL" id="LSBH01000002">
    <property type="protein sequence ID" value="OAQ83755.1"/>
    <property type="molecule type" value="Genomic_DNA"/>
</dbReference>
<dbReference type="EMBL" id="LSBI01000004">
    <property type="protein sequence ID" value="OAQ90535.1"/>
    <property type="molecule type" value="Genomic_DNA"/>
</dbReference>
<dbReference type="RefSeq" id="XP_018179254.1">
    <property type="nucleotide sequence ID" value="XM_018321775.1"/>
</dbReference>
<dbReference type="SMR" id="A0A179H0I7"/>
<dbReference type="STRING" id="33203.A0A179H0I7"/>
<dbReference type="GlyCosmos" id="A0A179H0I7">
    <property type="glycosylation" value="5 sites, No reported glycans"/>
</dbReference>
<dbReference type="GeneID" id="28886824"/>
<dbReference type="KEGG" id="plj:28886824"/>
<dbReference type="OMA" id="VSHYAAY"/>
<dbReference type="OrthoDB" id="1470350at2759"/>
<dbReference type="Proteomes" id="UP000078240">
    <property type="component" value="Unassembled WGS sequence"/>
</dbReference>
<dbReference type="Proteomes" id="UP000078340">
    <property type="component" value="Unassembled WGS sequence"/>
</dbReference>
<dbReference type="GO" id="GO:0016020">
    <property type="term" value="C:membrane"/>
    <property type="evidence" value="ECO:0007669"/>
    <property type="project" value="UniProtKB-SubCell"/>
</dbReference>
<dbReference type="GO" id="GO:0020037">
    <property type="term" value="F:heme binding"/>
    <property type="evidence" value="ECO:0007669"/>
    <property type="project" value="InterPro"/>
</dbReference>
<dbReference type="GO" id="GO:0005506">
    <property type="term" value="F:iron ion binding"/>
    <property type="evidence" value="ECO:0007669"/>
    <property type="project" value="InterPro"/>
</dbReference>
<dbReference type="GO" id="GO:0004497">
    <property type="term" value="F:monooxygenase activity"/>
    <property type="evidence" value="ECO:0007669"/>
    <property type="project" value="UniProtKB-KW"/>
</dbReference>
<dbReference type="GO" id="GO:0016705">
    <property type="term" value="F:oxidoreductase activity, acting on paired donors, with incorporation or reduction of molecular oxygen"/>
    <property type="evidence" value="ECO:0007669"/>
    <property type="project" value="InterPro"/>
</dbReference>
<dbReference type="GO" id="GO:0009058">
    <property type="term" value="P:biosynthetic process"/>
    <property type="evidence" value="ECO:0007669"/>
    <property type="project" value="UniProtKB-ARBA"/>
</dbReference>
<dbReference type="CDD" id="cd11058">
    <property type="entry name" value="CYP60B-like"/>
    <property type="match status" value="1"/>
</dbReference>
<dbReference type="FunFam" id="1.10.630.10:FF:000047">
    <property type="entry name" value="Cytochrome P450 monooxygenase"/>
    <property type="match status" value="1"/>
</dbReference>
<dbReference type="Gene3D" id="1.10.630.10">
    <property type="entry name" value="Cytochrome P450"/>
    <property type="match status" value="1"/>
</dbReference>
<dbReference type="InterPro" id="IPR001128">
    <property type="entry name" value="Cyt_P450"/>
</dbReference>
<dbReference type="InterPro" id="IPR017972">
    <property type="entry name" value="Cyt_P450_CS"/>
</dbReference>
<dbReference type="InterPro" id="IPR002401">
    <property type="entry name" value="Cyt_P450_E_grp-I"/>
</dbReference>
<dbReference type="InterPro" id="IPR036396">
    <property type="entry name" value="Cyt_P450_sf"/>
</dbReference>
<dbReference type="InterPro" id="IPR050121">
    <property type="entry name" value="Cytochrome_P450_monoxygenase"/>
</dbReference>
<dbReference type="PANTHER" id="PTHR24305">
    <property type="entry name" value="CYTOCHROME P450"/>
    <property type="match status" value="1"/>
</dbReference>
<dbReference type="PANTHER" id="PTHR24305:SF210">
    <property type="entry name" value="CYTOCHROME P450 MONOOXYGENASE ASQL-RELATED"/>
    <property type="match status" value="1"/>
</dbReference>
<dbReference type="Pfam" id="PF00067">
    <property type="entry name" value="p450"/>
    <property type="match status" value="1"/>
</dbReference>
<dbReference type="PRINTS" id="PR00463">
    <property type="entry name" value="EP450I"/>
</dbReference>
<dbReference type="PRINTS" id="PR00385">
    <property type="entry name" value="P450"/>
</dbReference>
<dbReference type="SUPFAM" id="SSF48264">
    <property type="entry name" value="Cytochrome P450"/>
    <property type="match status" value="1"/>
</dbReference>
<dbReference type="PROSITE" id="PS00086">
    <property type="entry name" value="CYTOCHROME_P450"/>
    <property type="match status" value="1"/>
</dbReference>
<comment type="function">
    <text evidence="4 7">Cytochrome P450 monooxygenase; part of the gene cluster that mediates the biosynthesis of the lipopeptide antibiotics leucinostatins that show extensive biological activities, including antimalarial, antiviral, antibacterial, antifungal, and antitumor activities, as well as phytotoxic (PubMed:27416025). Leucinostatin A contains nine amino acid residues, including the unusual amino acid 4-methyl-L-proline (MePro), 2-amino-6-hydroxy-4-methyl-8-oxodecanoic acid (AHyMeOA), 3-hydroxyleucine (HyLeu), alpha-aminoisobutyric acid (AIB), beta-Ala, a 4-methylhex-2-enoic acid at the N-terminus as well as a N1,N1-dimethylpropane-1,2-diamine (DPD) at the C-terminus (Probable). The biosynthesis of leucinostatins is probably initiated with the assembly of 4-methylhex-2-enoic acid by a reducing PKS. Two reducing polyketide synthases, lcsB and lcsC, have been identified in the cluster and it is not clear which is the one that assembles 4-methylhex-2-enoic acid since both contain KS, AT, DH, cMT, ER, KR and ACP domains (Probable). The polyketide residue might be transferred to the NRPS lcsA, mediated by two additional enzymes, the acyl-CoA ligase lcsD and the thioesterase lcsE. The linear polyketide carboxylic acid, which is released from PKS, is converted to a CoA thioester by lcsD, and then lcsE hydrolyzes the thiol bond and shuttles the polyketide intermediate to lcsA (Probable). The C domain of the first module catalyzed the condensation of 4-methylhex-2-enoic acid and MePro carried by domain A1, followed by successive condensations of nine amino acids to trigger the elongation of the linear peptide. A5 and A6 domains of lcsA are proposed to incorporate leucine, A2 AHyMeOA, and A3 incorporates HyLeu. A4, A7 and A8 incorporate AIB (Probable). The AHyMeOA in leucinostatin A activated by the A2 might be produced by the second PKS (lcsB or lcsC) present within the cluster (Probable). The MePro is probably produced via leucine cyclization and may originate from a separate pathway, independent of the cluster. Another nonproteinogenic amino acid, beta-Ala, could be produced by an aspartic acid decarboxylase also localized outside of the cluster. Two candidates are VFPBJ_01400 and VFPBJ_10476 (Probable). The final peptide scaffold may be released by the NAD(P)H-dependent thioester reductase (TE) at the C-terminal region of lcsA (Probable). Transamination of the lcsA product by the transaminase lcsP may produce DPD at the C-terminus (Probable). Further hydroxylation steps performed alternatively by the cytochrome P450 monooxygenases lcsI, lcsK and lcsN then yield the non-methylated leucinostatins precursor. It is also possible that leucines can be hydroxylated prior to their incorporation into the peptide (Probable). Varying extents of methylation then lead to the formation of leucinostatins A and B (Probable).</text>
</comment>
<comment type="cofactor">
    <cofactor evidence="1">
        <name>heme</name>
        <dbReference type="ChEBI" id="CHEBI:30413"/>
    </cofactor>
</comment>
<comment type="pathway">
    <text evidence="7">Secondary metabolite biosynthesis.</text>
</comment>
<comment type="subcellular location">
    <subcellularLocation>
        <location evidence="2">Membrane</location>
        <topology evidence="2">Single-pass membrane protein</topology>
    </subcellularLocation>
</comment>
<comment type="induction">
    <text evidence="4">Expression is positively regulated by the leucinostatins biosynthesis cluster-specific transcription regulator lcsF.</text>
</comment>
<comment type="similarity">
    <text evidence="6">Belongs to the cytochrome P450 family.</text>
</comment>
<sequence length="516" mass="58850">MPSIHASTSELFTHLTVSNICVAAGCAFALSLLYLYVRALYLVFFHPLSRIPGPKYAACSRLPYVRNQLRGDLVKWLHSLHQQYGDVVRIAPDEVSFISNVWQDVYAAHNGEKATKGTYLKDRRWFAAPYNNTWSILQADAEAHPRMRKMIAPAFSDKVLREQEAMIQEYVELFVLRLHEQTENDSKGDVDMVKWFNFFTFDIIADMTFGESFNCLRDSDYHPWVRMLFKSVRAISLNSAIRRYPFFQAIVKRLAPKNLLEQRRQFNQFVFDRVGERLASESSHPDLMSHIKKFKDEPKGMNRDEIDSNANILLVAGSETTATLLSGCTYMLLSNPEKLAKLTKEVRGTFNHPSEVTIKAVSNMPYLHAALSEALRIYPPSPAGFMRIVPGNGDMIGGHWIPGGTSVSVSQWPANHSDSNFTMPNSFVPERFLGDPRFEKDNTSVLNPFSAGPRNCLGKSLANVEMRLIMARLLLDFDLELIDPEQDWLDQKSFTLWEKLPLMVRLKPVRRYTAPA</sequence>
<gene>
    <name evidence="5" type="primary">lcsI</name>
    <name type="ORF">VFPBJ_02523</name>
    <name type="ORF">VFPFJ_04695</name>
</gene>
<protein>
    <recommendedName>
        <fullName evidence="5">Cytochrome P450 monooxygenase lcsI</fullName>
        <ecNumber evidence="7">1.-.-.-</ecNumber>
    </recommendedName>
    <alternativeName>
        <fullName evidence="5">Leucinostatins biosynthesis cluster protein I</fullName>
    </alternativeName>
</protein>
<feature type="chain" id="PRO_0000446604" description="Cytochrome P450 monooxygenase lcsI">
    <location>
        <begin position="1"/>
        <end position="516"/>
    </location>
</feature>
<feature type="transmembrane region" description="Helical" evidence="2">
    <location>
        <begin position="20"/>
        <end position="42"/>
    </location>
</feature>
<feature type="binding site" description="axial binding residue" evidence="1">
    <location>
        <position position="456"/>
    </location>
    <ligand>
        <name>heme</name>
        <dbReference type="ChEBI" id="CHEBI:30413"/>
    </ligand>
    <ligandPart>
        <name>Fe</name>
        <dbReference type="ChEBI" id="CHEBI:18248"/>
    </ligandPart>
</feature>
<feature type="glycosylation site" description="N-linked (GlcNAc...) asparagine" evidence="3">
    <location>
        <position position="131"/>
    </location>
</feature>
<feature type="glycosylation site" description="N-linked (GlcNAc...) asparagine" evidence="3">
    <location>
        <position position="184"/>
    </location>
</feature>
<feature type="glycosylation site" description="N-linked (GlcNAc...) asparagine" evidence="3">
    <location>
        <position position="415"/>
    </location>
</feature>
<feature type="glycosylation site" description="N-linked (GlcNAc...) asparagine" evidence="3">
    <location>
        <position position="420"/>
    </location>
</feature>
<feature type="glycosylation site" description="N-linked (GlcNAc...) asparagine" evidence="3">
    <location>
        <position position="442"/>
    </location>
</feature>
<evidence type="ECO:0000250" key="1">
    <source>
        <dbReference type="UniProtKB" id="P04798"/>
    </source>
</evidence>
<evidence type="ECO:0000255" key="2"/>
<evidence type="ECO:0000255" key="3">
    <source>
        <dbReference type="PROSITE-ProRule" id="PRU00498"/>
    </source>
</evidence>
<evidence type="ECO:0000269" key="4">
    <source>
    </source>
</evidence>
<evidence type="ECO:0000303" key="5">
    <source>
    </source>
</evidence>
<evidence type="ECO:0000305" key="6"/>
<evidence type="ECO:0000305" key="7">
    <source>
    </source>
</evidence>
<accession>A0A179H0I7</accession>